<protein>
    <recommendedName>
        <fullName evidence="8">Fructose-bisphosphate aldolase, chloroplastic</fullName>
        <ecNumber evidence="8">4.1.2.13</ecNumber>
    </recommendedName>
    <alternativeName>
        <fullName evidence="7">Chloroplastic aldolase</fullName>
        <shortName evidence="7">AldP</shortName>
    </alternativeName>
</protein>
<evidence type="ECO:0000250" key="1">
    <source>
        <dbReference type="UniProtKB" id="P00883"/>
    </source>
</evidence>
<evidence type="ECO:0000250" key="2">
    <source>
        <dbReference type="UniProtKB" id="Q944G9"/>
    </source>
</evidence>
<evidence type="ECO:0000250" key="3">
    <source>
        <dbReference type="UniProtKB" id="Q9SJQ9"/>
    </source>
</evidence>
<evidence type="ECO:0000250" key="4">
    <source>
        <dbReference type="UniProtKB" id="Q9SJU4"/>
    </source>
</evidence>
<evidence type="ECO:0000269" key="5">
    <source>
    </source>
</evidence>
<evidence type="ECO:0000269" key="6">
    <source>
    </source>
</evidence>
<evidence type="ECO:0000303" key="7">
    <source>
    </source>
</evidence>
<evidence type="ECO:0000305" key="8"/>
<evidence type="ECO:0000312" key="9">
    <source>
        <dbReference type="EMBL" id="ABA91630.2"/>
    </source>
</evidence>
<evidence type="ECO:0000312" key="10">
    <source>
        <dbReference type="EMBL" id="BAT12868.1"/>
    </source>
</evidence>
<evidence type="ECO:0000312" key="11">
    <source>
        <dbReference type="EMBL" id="EAZ17583.1"/>
    </source>
</evidence>
<keyword id="KW-0150">Chloroplast</keyword>
<keyword id="KW-0903">Direct protein sequencing</keyword>
<keyword id="KW-0324">Glycolysis</keyword>
<keyword id="KW-0456">Lyase</keyword>
<keyword id="KW-0934">Plastid</keyword>
<keyword id="KW-1185">Reference proteome</keyword>
<keyword id="KW-0704">Schiff base</keyword>
<keyword id="KW-0809">Transit peptide</keyword>
<name>ALFP_ORYSJ</name>
<accession>Q40677</accession>
<accession>Q2R9Z9</accession>
<accession>Q2RA00</accession>
<accession>Q2RA01</accession>
<accession>Q53P95</accession>
<accession>Q53P96</accession>
<accession>U5KP25</accession>
<reference key="1">
    <citation type="journal article" date="1994" name="Gene">
        <title>Structural analysis of the chloroplastic and cytoplasmic aldolase-encoding genes implicated the occurrence of multiple loci in rice.</title>
        <authorList>
            <person name="Tsutsumi K."/>
            <person name="Kagaya Y."/>
            <person name="Hidaka S."/>
            <person name="Suzuki J."/>
            <person name="Tokairin Y."/>
            <person name="Hirai T."/>
            <person name="Hu D."/>
            <person name="Ishikawa K."/>
            <person name="Ejiri S."/>
        </authorList>
    </citation>
    <scope>NUCLEOTIDE SEQUENCE [GENOMIC DNA]</scope>
</reference>
<reference key="2">
    <citation type="submission" date="2012-10" db="EMBL/GenBank/DDBJ databases">
        <title>Structural and expression analysis of immature seed genes in Oryza sativa L.</title>
        <authorList>
            <person name="Yoon U.H."/>
        </authorList>
    </citation>
    <scope>NUCLEOTIDE SEQUENCE [MRNA]</scope>
    <source>
        <strain>cv. Ilpoombyeo</strain>
        <tissue>Seed</tissue>
    </source>
</reference>
<reference key="3">
    <citation type="journal article" date="2005" name="BMC Biol.">
        <title>The sequence of rice chromosomes 11 and 12, rich in disease resistance genes and recent gene duplications.</title>
        <authorList>
            <consortium name="The rice chromosomes 11 and 12 sequencing consortia"/>
        </authorList>
    </citation>
    <scope>NUCLEOTIDE SEQUENCE [LARGE SCALE GENOMIC DNA]</scope>
    <source>
        <strain>cv. Nipponbare</strain>
    </source>
</reference>
<reference key="4">
    <citation type="journal article" date="2005" name="Nature">
        <title>The map-based sequence of the rice genome.</title>
        <authorList>
            <consortium name="International rice genome sequencing project (IRGSP)"/>
        </authorList>
    </citation>
    <scope>NUCLEOTIDE SEQUENCE [LARGE SCALE GENOMIC DNA]</scope>
    <source>
        <strain>cv. Nipponbare</strain>
    </source>
</reference>
<reference key="5">
    <citation type="journal article" date="2008" name="Nucleic Acids Res.">
        <title>The rice annotation project database (RAP-DB): 2008 update.</title>
        <authorList>
            <consortium name="The rice annotation project (RAP)"/>
        </authorList>
    </citation>
    <scope>GENOME REANNOTATION</scope>
    <source>
        <strain>cv. Nipponbare</strain>
    </source>
</reference>
<reference key="6">
    <citation type="journal article" date="2013" name="Rice">
        <title>Improvement of the Oryza sativa Nipponbare reference genome using next generation sequence and optical map data.</title>
        <authorList>
            <person name="Kawahara Y."/>
            <person name="de la Bastide M."/>
            <person name="Hamilton J.P."/>
            <person name="Kanamori H."/>
            <person name="McCombie W.R."/>
            <person name="Ouyang S."/>
            <person name="Schwartz D.C."/>
            <person name="Tanaka T."/>
            <person name="Wu J."/>
            <person name="Zhou S."/>
            <person name="Childs K.L."/>
            <person name="Davidson R.M."/>
            <person name="Lin H."/>
            <person name="Quesada-Ocampo L."/>
            <person name="Vaillancourt B."/>
            <person name="Sakai H."/>
            <person name="Lee S.S."/>
            <person name="Kim J."/>
            <person name="Numa H."/>
            <person name="Itoh T."/>
            <person name="Buell C.R."/>
            <person name="Matsumoto T."/>
        </authorList>
    </citation>
    <scope>GENOME REANNOTATION</scope>
    <source>
        <strain>cv. Nipponbare</strain>
    </source>
</reference>
<reference key="7">
    <citation type="journal article" date="2005" name="PLoS Biol.">
        <title>The genomes of Oryza sativa: a history of duplications.</title>
        <authorList>
            <person name="Yu J."/>
            <person name="Wang J."/>
            <person name="Lin W."/>
            <person name="Li S."/>
            <person name="Li H."/>
            <person name="Zhou J."/>
            <person name="Ni P."/>
            <person name="Dong W."/>
            <person name="Hu S."/>
            <person name="Zeng C."/>
            <person name="Zhang J."/>
            <person name="Zhang Y."/>
            <person name="Li R."/>
            <person name="Xu Z."/>
            <person name="Li S."/>
            <person name="Li X."/>
            <person name="Zheng H."/>
            <person name="Cong L."/>
            <person name="Lin L."/>
            <person name="Yin J."/>
            <person name="Geng J."/>
            <person name="Li G."/>
            <person name="Shi J."/>
            <person name="Liu J."/>
            <person name="Lv H."/>
            <person name="Li J."/>
            <person name="Wang J."/>
            <person name="Deng Y."/>
            <person name="Ran L."/>
            <person name="Shi X."/>
            <person name="Wang X."/>
            <person name="Wu Q."/>
            <person name="Li C."/>
            <person name="Ren X."/>
            <person name="Wang J."/>
            <person name="Wang X."/>
            <person name="Li D."/>
            <person name="Liu D."/>
            <person name="Zhang X."/>
            <person name="Ji Z."/>
            <person name="Zhao W."/>
            <person name="Sun Y."/>
            <person name="Zhang Z."/>
            <person name="Bao J."/>
            <person name="Han Y."/>
            <person name="Dong L."/>
            <person name="Ji J."/>
            <person name="Chen P."/>
            <person name="Wu S."/>
            <person name="Liu J."/>
            <person name="Xiao Y."/>
            <person name="Bu D."/>
            <person name="Tan J."/>
            <person name="Yang L."/>
            <person name="Ye C."/>
            <person name="Zhang J."/>
            <person name="Xu J."/>
            <person name="Zhou Y."/>
            <person name="Yu Y."/>
            <person name="Zhang B."/>
            <person name="Zhuang S."/>
            <person name="Wei H."/>
            <person name="Liu B."/>
            <person name="Lei M."/>
            <person name="Yu H."/>
            <person name="Li Y."/>
            <person name="Xu H."/>
            <person name="Wei S."/>
            <person name="He X."/>
            <person name="Fang L."/>
            <person name="Zhang Z."/>
            <person name="Zhang Y."/>
            <person name="Huang X."/>
            <person name="Su Z."/>
            <person name="Tong W."/>
            <person name="Li J."/>
            <person name="Tong Z."/>
            <person name="Li S."/>
            <person name="Ye J."/>
            <person name="Wang L."/>
            <person name="Fang L."/>
            <person name="Lei T."/>
            <person name="Chen C.-S."/>
            <person name="Chen H.-C."/>
            <person name="Xu Z."/>
            <person name="Li H."/>
            <person name="Huang H."/>
            <person name="Zhang F."/>
            <person name="Xu H."/>
            <person name="Li N."/>
            <person name="Zhao C."/>
            <person name="Li S."/>
            <person name="Dong L."/>
            <person name="Huang Y."/>
            <person name="Li L."/>
            <person name="Xi Y."/>
            <person name="Qi Q."/>
            <person name="Li W."/>
            <person name="Zhang B."/>
            <person name="Hu W."/>
            <person name="Zhang Y."/>
            <person name="Tian X."/>
            <person name="Jiao Y."/>
            <person name="Liang X."/>
            <person name="Jin J."/>
            <person name="Gao L."/>
            <person name="Zheng W."/>
            <person name="Hao B."/>
            <person name="Liu S.-M."/>
            <person name="Wang W."/>
            <person name="Yuan L."/>
            <person name="Cao M."/>
            <person name="McDermott J."/>
            <person name="Samudrala R."/>
            <person name="Wang J."/>
            <person name="Wong G.K.-S."/>
            <person name="Yang H."/>
        </authorList>
    </citation>
    <scope>NUCLEOTIDE SEQUENCE [LARGE SCALE GENOMIC DNA]</scope>
    <source>
        <strain>cv. Nipponbare</strain>
    </source>
</reference>
<reference key="8">
    <citation type="journal article" date="2003" name="Science">
        <title>Collection, mapping, and annotation of over 28,000 cDNA clones from japonica rice.</title>
        <authorList>
            <consortium name="The rice full-length cDNA consortium"/>
        </authorList>
    </citation>
    <scope>NUCLEOTIDE SEQUENCE [LARGE SCALE MRNA]</scope>
    <source>
        <strain>cv. Nipponbare</strain>
    </source>
</reference>
<reference key="9">
    <citation type="journal article" date="1992" name="Jpn. J. Genet.">
        <title>Molecular cloning and characterization of gravity specific cDNA in rice (Oryza sativa L.) suspension callus.</title>
        <authorList>
            <person name="Kwon S."/>
            <person name="Kikuchi S."/>
            <person name="Oono K."/>
        </authorList>
    </citation>
    <scope>TISSUE SPECIFICITY</scope>
    <scope>INDUCTION BY LIGHT</scope>
</reference>
<reference key="10">
    <citation type="journal article" date="2006" name="Proteomics">
        <title>Proteomic analysis of rice leaf, stem and root tissues during growth course.</title>
        <authorList>
            <person name="Nozu Y."/>
            <person name="Tsugita A."/>
            <person name="Kamijo K."/>
        </authorList>
    </citation>
    <scope>PROTEIN SEQUENCE [LARGE SCALE ANALYSIS] OF 39-45</scope>
    <scope>IDENTIFICATION BY MASS SPECTROMETRY</scope>
    <source>
        <strain>cv. Nipponbare</strain>
    </source>
</reference>
<dbReference type="EC" id="4.1.2.13" evidence="8"/>
<dbReference type="EMBL" id="D13513">
    <property type="protein sequence ID" value="BAA02730.1"/>
    <property type="molecule type" value="Genomic_DNA"/>
</dbReference>
<dbReference type="EMBL" id="JX972166">
    <property type="protein sequence ID" value="AGT38460.1"/>
    <property type="molecule type" value="mRNA"/>
</dbReference>
<dbReference type="EMBL" id="AC128643">
    <property type="protein sequence ID" value="AAX95072.1"/>
    <property type="molecule type" value="Genomic_DNA"/>
</dbReference>
<dbReference type="EMBL" id="AC128643">
    <property type="protein sequence ID" value="AAX95073.1"/>
    <property type="status" value="ALT_SEQ"/>
    <property type="molecule type" value="Genomic_DNA"/>
</dbReference>
<dbReference type="EMBL" id="DP000010">
    <property type="protein sequence ID" value="ABA91630.2"/>
    <property type="molecule type" value="Genomic_DNA"/>
</dbReference>
<dbReference type="EMBL" id="DP000010">
    <property type="protein sequence ID" value="ABA91631.2"/>
    <property type="status" value="ALT_SEQ"/>
    <property type="molecule type" value="Genomic_DNA"/>
</dbReference>
<dbReference type="EMBL" id="DP000010">
    <property type="protein sequence ID" value="ABA91632.2"/>
    <property type="status" value="ALT_SEQ"/>
    <property type="molecule type" value="Genomic_DNA"/>
</dbReference>
<dbReference type="EMBL" id="AP008217">
    <property type="protein sequence ID" value="BAF27707.1"/>
    <property type="molecule type" value="Genomic_DNA"/>
</dbReference>
<dbReference type="EMBL" id="AP014967">
    <property type="protein sequence ID" value="BAT12868.1"/>
    <property type="molecule type" value="Genomic_DNA"/>
</dbReference>
<dbReference type="EMBL" id="CM000148">
    <property type="protein sequence ID" value="EAZ17583.1"/>
    <property type="molecule type" value="Genomic_DNA"/>
</dbReference>
<dbReference type="EMBL" id="AK104899">
    <property type="protein sequence ID" value="BAG97016.1"/>
    <property type="molecule type" value="mRNA"/>
</dbReference>
<dbReference type="PIR" id="T03679">
    <property type="entry name" value="T03679"/>
</dbReference>
<dbReference type="RefSeq" id="XP_015616895.1">
    <property type="nucleotide sequence ID" value="XM_015761409.1"/>
</dbReference>
<dbReference type="SMR" id="Q40677"/>
<dbReference type="FunCoup" id="Q40677">
    <property type="interactions" value="949"/>
</dbReference>
<dbReference type="IntAct" id="Q40677">
    <property type="interactions" value="1"/>
</dbReference>
<dbReference type="STRING" id="39947.Q40677"/>
<dbReference type="PaxDb" id="39947-Q40677"/>
<dbReference type="EnsemblPlants" id="Os11t0171300-01">
    <property type="protein sequence ID" value="Os11t0171300-01"/>
    <property type="gene ID" value="Os11g0171300"/>
</dbReference>
<dbReference type="Gramene" id="Os11t0171300-01">
    <property type="protein sequence ID" value="Os11t0171300-01"/>
    <property type="gene ID" value="Os11g0171300"/>
</dbReference>
<dbReference type="KEGG" id="dosa:Os11g0171300"/>
<dbReference type="eggNOG" id="KOG1557">
    <property type="taxonomic scope" value="Eukaryota"/>
</dbReference>
<dbReference type="HOGENOM" id="CLU_031243_0_0_1"/>
<dbReference type="InParanoid" id="Q40677"/>
<dbReference type="OMA" id="EVASMVW"/>
<dbReference type="OrthoDB" id="36455at2759"/>
<dbReference type="UniPathway" id="UPA00109">
    <property type="reaction ID" value="UER00183"/>
</dbReference>
<dbReference type="Proteomes" id="UP000000763">
    <property type="component" value="Chromosome 11"/>
</dbReference>
<dbReference type="Proteomes" id="UP000007752">
    <property type="component" value="Chromosome 11"/>
</dbReference>
<dbReference type="Proteomes" id="UP000059680">
    <property type="component" value="Chromosome 11"/>
</dbReference>
<dbReference type="GO" id="GO:0005737">
    <property type="term" value="C:cytoplasm"/>
    <property type="evidence" value="ECO:0000250"/>
    <property type="project" value="Gramene"/>
</dbReference>
<dbReference type="GO" id="GO:0005829">
    <property type="term" value="C:cytosol"/>
    <property type="evidence" value="ECO:0000318"/>
    <property type="project" value="GO_Central"/>
</dbReference>
<dbReference type="GO" id="GO:0010287">
    <property type="term" value="C:plastoglobule"/>
    <property type="evidence" value="ECO:0007669"/>
    <property type="project" value="UniProtKB-SubCell"/>
</dbReference>
<dbReference type="GO" id="GO:0004332">
    <property type="term" value="F:fructose-bisphosphate aldolase activity"/>
    <property type="evidence" value="ECO:0000250"/>
    <property type="project" value="UniProtKB"/>
</dbReference>
<dbReference type="GO" id="GO:0030388">
    <property type="term" value="P:fructose 1,6-bisphosphate metabolic process"/>
    <property type="evidence" value="ECO:0000318"/>
    <property type="project" value="GO_Central"/>
</dbReference>
<dbReference type="GO" id="GO:0006094">
    <property type="term" value="P:gluconeogenesis"/>
    <property type="evidence" value="ECO:0000250"/>
    <property type="project" value="UniProtKB"/>
</dbReference>
<dbReference type="GO" id="GO:0006096">
    <property type="term" value="P:glycolytic process"/>
    <property type="evidence" value="ECO:0000250"/>
    <property type="project" value="UniProtKB"/>
</dbReference>
<dbReference type="CDD" id="cd00948">
    <property type="entry name" value="FBP_aldolase_I_a"/>
    <property type="match status" value="1"/>
</dbReference>
<dbReference type="FunFam" id="3.20.20.70:FF:000052">
    <property type="entry name" value="Fructose-bisphosphate aldolase"/>
    <property type="match status" value="1"/>
</dbReference>
<dbReference type="Gene3D" id="3.20.20.70">
    <property type="entry name" value="Aldolase class I"/>
    <property type="match status" value="1"/>
</dbReference>
<dbReference type="InterPro" id="IPR029768">
    <property type="entry name" value="Aldolase_I_AS"/>
</dbReference>
<dbReference type="InterPro" id="IPR013785">
    <property type="entry name" value="Aldolase_TIM"/>
</dbReference>
<dbReference type="InterPro" id="IPR000741">
    <property type="entry name" value="FBA_I"/>
</dbReference>
<dbReference type="NCBIfam" id="NF033379">
    <property type="entry name" value="FrucBisAld_I"/>
    <property type="match status" value="1"/>
</dbReference>
<dbReference type="PANTHER" id="PTHR11627">
    <property type="entry name" value="FRUCTOSE-BISPHOSPHATE ALDOLASE"/>
    <property type="match status" value="1"/>
</dbReference>
<dbReference type="Pfam" id="PF00274">
    <property type="entry name" value="Glycolytic"/>
    <property type="match status" value="1"/>
</dbReference>
<dbReference type="SUPFAM" id="SSF51569">
    <property type="entry name" value="Aldolase"/>
    <property type="match status" value="1"/>
</dbReference>
<dbReference type="PROSITE" id="PS00158">
    <property type="entry name" value="ALDOLASE_CLASS_I"/>
    <property type="match status" value="1"/>
</dbReference>
<gene>
    <name evidence="8" type="primary">ALDP</name>
    <name evidence="10" type="ordered locus">Os11g0171300</name>
    <name evidence="9" type="ordered locus">LOC_Os11g07020</name>
    <name evidence="11" type="ORF">OsJ_33121</name>
</gene>
<proteinExistence type="evidence at protein level"/>
<feature type="transit peptide" description="Chloroplast" evidence="6">
    <location>
        <begin position="1"/>
        <end position="38"/>
    </location>
</feature>
<feature type="chain" id="PRO_0000001112" description="Fructose-bisphosphate aldolase, chloroplastic">
    <location>
        <begin position="39"/>
        <end position="388"/>
    </location>
</feature>
<feature type="active site" description="Proton acceptor" evidence="1">
    <location>
        <position position="215"/>
    </location>
</feature>
<feature type="active site" description="Schiff-base intermediate with dihydroxyacetone-P" evidence="1">
    <location>
        <position position="257"/>
    </location>
</feature>
<feature type="binding site" evidence="1">
    <location>
        <position position="72"/>
    </location>
    <ligand>
        <name>substrate</name>
    </ligand>
</feature>
<feature type="binding site" evidence="1">
    <location>
        <begin position="299"/>
        <end position="301"/>
    </location>
    <ligand>
        <name>substrate</name>
    </ligand>
</feature>
<feature type="binding site" evidence="1">
    <location>
        <position position="329"/>
    </location>
    <ligand>
        <name>substrate</name>
    </ligand>
</feature>
<feature type="site" description="Necessary for preference for fructose 1,6-bisphosphate over fructose 1-phosphate" evidence="1">
    <location>
        <position position="388"/>
    </location>
</feature>
<feature type="sequence conflict" description="In Ref. 1; BAA02730." evidence="8" ref="1">
    <original>L</original>
    <variation>R</variation>
    <location>
        <position position="156"/>
    </location>
</feature>
<feature type="sequence conflict" description="In Ref. 1; BAA02730." evidence="8" ref="1">
    <original>G</original>
    <variation>A</variation>
    <location>
        <position position="294"/>
    </location>
</feature>
<feature type="sequence conflict" description="In Ref. 1; BAA02730." evidence="8" ref="1">
    <original>A</original>
    <variation>R</variation>
    <location>
        <position position="352"/>
    </location>
</feature>
<sequence length="388" mass="42006">MASATLLKSSFLPKKSEWGATRQAAAPKPVTVSMVVRAGAYDDELVKTAKTIASPGRGILAMDESNATCGKRLASIGLENTEANRQAYRTLLVTAPGLGQYISGAILFEETLYQSTVDGKKIVDILTEQKIVPGIKVDKGLVPLAGSNNESWCQGLDGLASREAAYYQQGARFAKWRTVVSIPNGPSELAVKEAAWGLARYAAISQDNGLVPIVEPEILLDGEHGIDRTFEVAQKVWAETFFYMAENNVMFEGILLKPSMVTPGAECKDRATPEQVSDYTLKLLHRRIPPAVPGIMFLSGGQSEVEATQNLNAMNQGPNPWHVSFSYARALQNTCLKTWGGQPENVKAAQDALLLRAKANSLAQLGKYTSDGEAAEAKEGMFVKNYVY</sequence>
<organism>
    <name type="scientific">Oryza sativa subsp. japonica</name>
    <name type="common">Rice</name>
    <dbReference type="NCBI Taxonomy" id="39947"/>
    <lineage>
        <taxon>Eukaryota</taxon>
        <taxon>Viridiplantae</taxon>
        <taxon>Streptophyta</taxon>
        <taxon>Embryophyta</taxon>
        <taxon>Tracheophyta</taxon>
        <taxon>Spermatophyta</taxon>
        <taxon>Magnoliopsida</taxon>
        <taxon>Liliopsida</taxon>
        <taxon>Poales</taxon>
        <taxon>Poaceae</taxon>
        <taxon>BOP clade</taxon>
        <taxon>Oryzoideae</taxon>
        <taxon>Oryzeae</taxon>
        <taxon>Oryzinae</taxon>
        <taxon>Oryza</taxon>
        <taxon>Oryza sativa</taxon>
    </lineage>
</organism>
<comment type="function">
    <text evidence="3">Plays a key role in glycolysis and gluconeogenesis.</text>
</comment>
<comment type="catalytic activity">
    <reaction evidence="3">
        <text>beta-D-fructose 1,6-bisphosphate = D-glyceraldehyde 3-phosphate + dihydroxyacetone phosphate</text>
        <dbReference type="Rhea" id="RHEA:14729"/>
        <dbReference type="ChEBI" id="CHEBI:32966"/>
        <dbReference type="ChEBI" id="CHEBI:57642"/>
        <dbReference type="ChEBI" id="CHEBI:59776"/>
        <dbReference type="EC" id="4.1.2.13"/>
    </reaction>
</comment>
<comment type="pathway">
    <text evidence="8">Carbohydrate degradation; glycolysis; D-glyceraldehyde 3-phosphate and glycerone phosphate from D-glucose: step 4/4.</text>
</comment>
<comment type="subunit">
    <text evidence="2">Homotetramer.</text>
</comment>
<comment type="subcellular location">
    <subcellularLocation>
        <location evidence="4">Plastid</location>
        <location evidence="4">Chloroplast</location>
        <location evidence="4">Plastoglobule</location>
    </subcellularLocation>
</comment>
<comment type="tissue specificity">
    <text evidence="5">Expressed in leaf mesophyll cells.</text>
</comment>
<comment type="induction">
    <text evidence="5">By exposure to light.</text>
</comment>
<comment type="similarity">
    <text evidence="8">Belongs to the class I fructose-bisphosphate aldolase family.</text>
</comment>
<comment type="sequence caution" evidence="8">
    <conflict type="erroneous gene model prediction">
        <sequence resource="EMBL-CDS" id="AAX95073"/>
    </conflict>
</comment>
<comment type="sequence caution" evidence="8">
    <conflict type="erroneous gene model prediction">
        <sequence resource="EMBL-CDS" id="ABA91631"/>
    </conflict>
</comment>
<comment type="sequence caution" evidence="8">
    <conflict type="erroneous gene model prediction">
        <sequence resource="EMBL-CDS" id="ABA91632"/>
    </conflict>
</comment>